<reference key="1">
    <citation type="journal article" date="2007" name="Mol. Biol. Evol.">
        <title>The complete chloroplast and mitochondrial DNA sequence of Ostreococcus tauri: organelle genomes of the smallest eukaryote are examples of compaction.</title>
        <authorList>
            <person name="Robbens S."/>
            <person name="Derelle E."/>
            <person name="Ferraz C."/>
            <person name="Wuyts J."/>
            <person name="Moreau H."/>
            <person name="Van de Peer Y."/>
        </authorList>
    </citation>
    <scope>NUCLEOTIDE SEQUENCE [LARGE SCALE GENOMIC DNA]</scope>
    <source>
        <strain>OTTH0595</strain>
    </source>
</reference>
<feature type="chain" id="PRO_0000276917" description="Small ribosomal subunit protein uS19c">
    <location>
        <begin position="1"/>
        <end position="92"/>
    </location>
</feature>
<comment type="function">
    <text evidence="1">Protein S19 forms a complex with S13 that binds strongly to the 16S ribosomal RNA.</text>
</comment>
<comment type="subcellular location">
    <subcellularLocation>
        <location>Plastid</location>
        <location>Chloroplast</location>
    </subcellularLocation>
</comment>
<comment type="similarity">
    <text evidence="1">Belongs to the universal ribosomal protein uS19 family.</text>
</comment>
<proteinExistence type="inferred from homology"/>
<gene>
    <name evidence="1" type="primary">rps19</name>
    <name type="ordered locus">OtCpg00340</name>
</gene>
<name>RR19_OSTTA</name>
<dbReference type="EMBL" id="CR954199">
    <property type="protein sequence ID" value="CAL36359.1"/>
    <property type="molecule type" value="Genomic_DNA"/>
</dbReference>
<dbReference type="RefSeq" id="YP_717237.1">
    <property type="nucleotide sequence ID" value="NC_008289.1"/>
</dbReference>
<dbReference type="SMR" id="Q0P3L8"/>
<dbReference type="FunCoup" id="Q0P3L8">
    <property type="interactions" value="56"/>
</dbReference>
<dbReference type="STRING" id="70448.Q0P3L8"/>
<dbReference type="GeneID" id="4238841"/>
<dbReference type="KEGG" id="ota:OstapCp34"/>
<dbReference type="eggNOG" id="KOG0899">
    <property type="taxonomic scope" value="Eukaryota"/>
</dbReference>
<dbReference type="InParanoid" id="Q0P3L8"/>
<dbReference type="Proteomes" id="UP000009170">
    <property type="component" value="Chloroplast"/>
</dbReference>
<dbReference type="GO" id="GO:0009507">
    <property type="term" value="C:chloroplast"/>
    <property type="evidence" value="ECO:0007669"/>
    <property type="project" value="UniProtKB-SubCell"/>
</dbReference>
<dbReference type="GO" id="GO:0005763">
    <property type="term" value="C:mitochondrial small ribosomal subunit"/>
    <property type="evidence" value="ECO:0007669"/>
    <property type="project" value="TreeGrafter"/>
</dbReference>
<dbReference type="GO" id="GO:0019843">
    <property type="term" value="F:rRNA binding"/>
    <property type="evidence" value="ECO:0007669"/>
    <property type="project" value="UniProtKB-UniRule"/>
</dbReference>
<dbReference type="GO" id="GO:0003735">
    <property type="term" value="F:structural constituent of ribosome"/>
    <property type="evidence" value="ECO:0007669"/>
    <property type="project" value="InterPro"/>
</dbReference>
<dbReference type="GO" id="GO:0000028">
    <property type="term" value="P:ribosomal small subunit assembly"/>
    <property type="evidence" value="ECO:0007669"/>
    <property type="project" value="TreeGrafter"/>
</dbReference>
<dbReference type="GO" id="GO:0006412">
    <property type="term" value="P:translation"/>
    <property type="evidence" value="ECO:0007669"/>
    <property type="project" value="UniProtKB-UniRule"/>
</dbReference>
<dbReference type="FunFam" id="3.30.860.10:FF:000001">
    <property type="entry name" value="30S ribosomal protein S19"/>
    <property type="match status" value="1"/>
</dbReference>
<dbReference type="Gene3D" id="3.30.860.10">
    <property type="entry name" value="30s Ribosomal Protein S19, Chain A"/>
    <property type="match status" value="1"/>
</dbReference>
<dbReference type="HAMAP" id="MF_00531">
    <property type="entry name" value="Ribosomal_uS19"/>
    <property type="match status" value="1"/>
</dbReference>
<dbReference type="InterPro" id="IPR002222">
    <property type="entry name" value="Ribosomal_uS19"/>
</dbReference>
<dbReference type="InterPro" id="IPR005732">
    <property type="entry name" value="Ribosomal_uS19_bac-type"/>
</dbReference>
<dbReference type="InterPro" id="IPR020934">
    <property type="entry name" value="Ribosomal_uS19_CS"/>
</dbReference>
<dbReference type="InterPro" id="IPR023575">
    <property type="entry name" value="Ribosomal_uS19_SF"/>
</dbReference>
<dbReference type="NCBIfam" id="TIGR01050">
    <property type="entry name" value="rpsS_bact"/>
    <property type="match status" value="1"/>
</dbReference>
<dbReference type="PANTHER" id="PTHR11880">
    <property type="entry name" value="RIBOSOMAL PROTEIN S19P FAMILY MEMBER"/>
    <property type="match status" value="1"/>
</dbReference>
<dbReference type="PANTHER" id="PTHR11880:SF8">
    <property type="entry name" value="SMALL RIBOSOMAL SUBUNIT PROTEIN US19M"/>
    <property type="match status" value="1"/>
</dbReference>
<dbReference type="Pfam" id="PF00203">
    <property type="entry name" value="Ribosomal_S19"/>
    <property type="match status" value="1"/>
</dbReference>
<dbReference type="PIRSF" id="PIRSF002144">
    <property type="entry name" value="Ribosomal_S19"/>
    <property type="match status" value="1"/>
</dbReference>
<dbReference type="PRINTS" id="PR00975">
    <property type="entry name" value="RIBOSOMALS19"/>
</dbReference>
<dbReference type="SUPFAM" id="SSF54570">
    <property type="entry name" value="Ribosomal protein S19"/>
    <property type="match status" value="1"/>
</dbReference>
<dbReference type="PROSITE" id="PS00323">
    <property type="entry name" value="RIBOSOMAL_S19"/>
    <property type="match status" value="1"/>
</dbReference>
<accession>Q0P3L8</accession>
<sequence length="92" mass="10406">MARSLKKGPFVADKLMKKIELLHSKGEKTVIQTWSRSSTITPIMIGHTIAVHNGREHIPVFVTDQMVGHKLGEFSPTRTFRGHVKSDKKSKR</sequence>
<geneLocation type="chloroplast"/>
<keyword id="KW-0150">Chloroplast</keyword>
<keyword id="KW-0934">Plastid</keyword>
<keyword id="KW-1185">Reference proteome</keyword>
<keyword id="KW-0687">Ribonucleoprotein</keyword>
<keyword id="KW-0689">Ribosomal protein</keyword>
<keyword id="KW-0694">RNA-binding</keyword>
<keyword id="KW-0699">rRNA-binding</keyword>
<evidence type="ECO:0000255" key="1">
    <source>
        <dbReference type="HAMAP-Rule" id="MF_00531"/>
    </source>
</evidence>
<evidence type="ECO:0000305" key="2"/>
<protein>
    <recommendedName>
        <fullName evidence="1">Small ribosomal subunit protein uS19c</fullName>
    </recommendedName>
    <alternativeName>
        <fullName evidence="2">30S ribosomal protein S19, chloroplastic</fullName>
    </alternativeName>
</protein>
<organism>
    <name type="scientific">Ostreococcus tauri</name>
    <dbReference type="NCBI Taxonomy" id="70448"/>
    <lineage>
        <taxon>Eukaryota</taxon>
        <taxon>Viridiplantae</taxon>
        <taxon>Chlorophyta</taxon>
        <taxon>Mamiellophyceae</taxon>
        <taxon>Mamiellales</taxon>
        <taxon>Bathycoccaceae</taxon>
        <taxon>Ostreococcus</taxon>
    </lineage>
</organism>